<organism>
    <name type="scientific">Blochmanniella floridana</name>
    <dbReference type="NCBI Taxonomy" id="203907"/>
    <lineage>
        <taxon>Bacteria</taxon>
        <taxon>Pseudomonadati</taxon>
        <taxon>Pseudomonadota</taxon>
        <taxon>Gammaproteobacteria</taxon>
        <taxon>Enterobacterales</taxon>
        <taxon>Enterobacteriaceae</taxon>
        <taxon>ant endosymbionts</taxon>
        <taxon>Candidatus Blochmanniella</taxon>
    </lineage>
</organism>
<comment type="function">
    <text evidence="1">Catalyzes the initial step of the lipid cycle reactions in the biosynthesis of the cell wall peptidoglycan: transfers peptidoglycan precursor phospho-MurNAc-pentapeptide from UDP-MurNAc-pentapeptide onto the lipid carrier undecaprenyl phosphate, yielding undecaprenyl-pyrophosphoryl-MurNAc-pentapeptide, known as lipid I.</text>
</comment>
<comment type="catalytic activity">
    <reaction evidence="1">
        <text>UDP-N-acetyl-alpha-D-muramoyl-L-alanyl-gamma-D-glutamyl-meso-2,6-diaminopimeloyl-D-alanyl-D-alanine + di-trans,octa-cis-undecaprenyl phosphate = di-trans,octa-cis-undecaprenyl diphospho-N-acetyl-alpha-D-muramoyl-L-alanyl-D-glutamyl-meso-2,6-diaminopimeloyl-D-alanyl-D-alanine + UMP</text>
        <dbReference type="Rhea" id="RHEA:28386"/>
        <dbReference type="ChEBI" id="CHEBI:57865"/>
        <dbReference type="ChEBI" id="CHEBI:60392"/>
        <dbReference type="ChEBI" id="CHEBI:61386"/>
        <dbReference type="ChEBI" id="CHEBI:61387"/>
        <dbReference type="EC" id="2.7.8.13"/>
    </reaction>
</comment>
<comment type="cofactor">
    <cofactor evidence="1">
        <name>Mg(2+)</name>
        <dbReference type="ChEBI" id="CHEBI:18420"/>
    </cofactor>
</comment>
<comment type="pathway">
    <text evidence="1">Cell wall biogenesis; peptidoglycan biosynthesis.</text>
</comment>
<comment type="subcellular location">
    <subcellularLocation>
        <location evidence="1">Cell inner membrane</location>
        <topology evidence="1">Multi-pass membrane protein</topology>
    </subcellularLocation>
</comment>
<comment type="similarity">
    <text evidence="1">Belongs to the glycosyltransferase 4 family. MraY subfamily.</text>
</comment>
<feature type="chain" id="PRO_0000108803" description="Phospho-N-acetylmuramoyl-pentapeptide-transferase">
    <location>
        <begin position="1"/>
        <end position="365"/>
    </location>
</feature>
<feature type="transmembrane region" description="Helical" evidence="1">
    <location>
        <begin position="29"/>
        <end position="49"/>
    </location>
</feature>
<feature type="transmembrane region" description="Helical" evidence="1">
    <location>
        <begin position="73"/>
        <end position="93"/>
    </location>
</feature>
<feature type="transmembrane region" description="Helical" evidence="1">
    <location>
        <begin position="97"/>
        <end position="117"/>
    </location>
</feature>
<feature type="transmembrane region" description="Helical" evidence="1">
    <location>
        <begin position="133"/>
        <end position="153"/>
    </location>
</feature>
<feature type="transmembrane region" description="Helical" evidence="1">
    <location>
        <begin position="171"/>
        <end position="191"/>
    </location>
</feature>
<feature type="transmembrane region" description="Helical" evidence="1">
    <location>
        <begin position="202"/>
        <end position="222"/>
    </location>
</feature>
<feature type="transmembrane region" description="Helical" evidence="1">
    <location>
        <begin position="242"/>
        <end position="262"/>
    </location>
</feature>
<feature type="transmembrane region" description="Helical" evidence="1">
    <location>
        <begin position="266"/>
        <end position="286"/>
    </location>
</feature>
<feature type="transmembrane region" description="Helical" evidence="1">
    <location>
        <begin position="291"/>
        <end position="311"/>
    </location>
</feature>
<feature type="transmembrane region" description="Helical" evidence="1">
    <location>
        <begin position="341"/>
        <end position="361"/>
    </location>
</feature>
<reference key="1">
    <citation type="journal article" date="2003" name="Proc. Natl. Acad. Sci. U.S.A.">
        <title>The genome sequence of Blochmannia floridanus: comparative analysis of reduced genomes.</title>
        <authorList>
            <person name="Gil R."/>
            <person name="Silva F.J."/>
            <person name="Zientz E."/>
            <person name="Delmotte F."/>
            <person name="Gonzalez-Candelas F."/>
            <person name="Latorre A."/>
            <person name="Rausell C."/>
            <person name="Kamerbeek J."/>
            <person name="Gadau J."/>
            <person name="Hoelldobler B."/>
            <person name="van Ham R.C.H.J."/>
            <person name="Gross R."/>
            <person name="Moya A."/>
        </authorList>
    </citation>
    <scope>NUCLEOTIDE SEQUENCE [LARGE SCALE GENOMIC DNA]</scope>
</reference>
<sequence length="365" mass="41504">MLFWIIKITSYFYSSTLFEVMNSVLFRGVGGLFFSLFISIVIGNRIIVWLKYKLRMLQTIRIDGPQSHKLKYGTPTMGGIIILISVVTSVIIWSDLSNIYIWYILFIFVMYGILGLVDDFLKIKRGDNLGLTILNKYLWQSIIAWILIVIMFINRVNYVENQSGLEFLRNIVCKLKIWDMILAYFVIVGTSNSVNLSDGLDGLVIVPVILVVSGLAIVTWVVGNIYITSDLYIEHVDCIKELVVVCASIIGAGLGFLWFNSYPSQIFMGDVGSLSLGGVIGLVSILLHQEYLLLIMGGIFVIESLSVIFQVSYFKIFKKRIFKMAPIHHHFELKGYMEPKIVVRFWIVSSILVLLSIVIFILSKY</sequence>
<evidence type="ECO:0000255" key="1">
    <source>
        <dbReference type="HAMAP-Rule" id="MF_00038"/>
    </source>
</evidence>
<proteinExistence type="inferred from homology"/>
<keyword id="KW-0131">Cell cycle</keyword>
<keyword id="KW-0132">Cell division</keyword>
<keyword id="KW-0997">Cell inner membrane</keyword>
<keyword id="KW-1003">Cell membrane</keyword>
<keyword id="KW-0133">Cell shape</keyword>
<keyword id="KW-0961">Cell wall biogenesis/degradation</keyword>
<keyword id="KW-0460">Magnesium</keyword>
<keyword id="KW-0472">Membrane</keyword>
<keyword id="KW-0479">Metal-binding</keyword>
<keyword id="KW-0573">Peptidoglycan synthesis</keyword>
<keyword id="KW-1185">Reference proteome</keyword>
<keyword id="KW-0808">Transferase</keyword>
<keyword id="KW-0812">Transmembrane</keyword>
<keyword id="KW-1133">Transmembrane helix</keyword>
<gene>
    <name evidence="1" type="primary">mraY</name>
    <name type="ordered locus">Bfl139</name>
</gene>
<protein>
    <recommendedName>
        <fullName evidence="1">Phospho-N-acetylmuramoyl-pentapeptide-transferase</fullName>
        <ecNumber evidence="1">2.7.8.13</ecNumber>
    </recommendedName>
    <alternativeName>
        <fullName evidence="1">UDP-MurNAc-pentapeptide phosphotransferase</fullName>
    </alternativeName>
</protein>
<dbReference type="EC" id="2.7.8.13" evidence="1"/>
<dbReference type="EMBL" id="BX248583">
    <property type="protein sequence ID" value="CAD83660.1"/>
    <property type="molecule type" value="Genomic_DNA"/>
</dbReference>
<dbReference type="SMR" id="Q7VQJ0"/>
<dbReference type="STRING" id="203907.Bfl139"/>
<dbReference type="KEGG" id="bfl:Bfl139"/>
<dbReference type="eggNOG" id="COG0472">
    <property type="taxonomic scope" value="Bacteria"/>
</dbReference>
<dbReference type="HOGENOM" id="CLU_023982_0_0_6"/>
<dbReference type="OrthoDB" id="9805475at2"/>
<dbReference type="UniPathway" id="UPA00219"/>
<dbReference type="Proteomes" id="UP000002192">
    <property type="component" value="Chromosome"/>
</dbReference>
<dbReference type="GO" id="GO:0005886">
    <property type="term" value="C:plasma membrane"/>
    <property type="evidence" value="ECO:0007669"/>
    <property type="project" value="UniProtKB-SubCell"/>
</dbReference>
<dbReference type="GO" id="GO:0046872">
    <property type="term" value="F:metal ion binding"/>
    <property type="evidence" value="ECO:0007669"/>
    <property type="project" value="UniProtKB-KW"/>
</dbReference>
<dbReference type="GO" id="GO:0008963">
    <property type="term" value="F:phospho-N-acetylmuramoyl-pentapeptide-transferase activity"/>
    <property type="evidence" value="ECO:0007669"/>
    <property type="project" value="UniProtKB-UniRule"/>
</dbReference>
<dbReference type="GO" id="GO:0051992">
    <property type="term" value="F:UDP-N-acetylmuramoyl-L-alanyl-D-glutamyl-meso-2,6-diaminopimelyl-D-alanyl-D-alanine:undecaprenyl-phosphate transferase activity"/>
    <property type="evidence" value="ECO:0007669"/>
    <property type="project" value="RHEA"/>
</dbReference>
<dbReference type="GO" id="GO:0051301">
    <property type="term" value="P:cell division"/>
    <property type="evidence" value="ECO:0007669"/>
    <property type="project" value="UniProtKB-KW"/>
</dbReference>
<dbReference type="GO" id="GO:0071555">
    <property type="term" value="P:cell wall organization"/>
    <property type="evidence" value="ECO:0007669"/>
    <property type="project" value="UniProtKB-KW"/>
</dbReference>
<dbReference type="GO" id="GO:0009252">
    <property type="term" value="P:peptidoglycan biosynthetic process"/>
    <property type="evidence" value="ECO:0007669"/>
    <property type="project" value="UniProtKB-UniRule"/>
</dbReference>
<dbReference type="GO" id="GO:0008360">
    <property type="term" value="P:regulation of cell shape"/>
    <property type="evidence" value="ECO:0007669"/>
    <property type="project" value="UniProtKB-KW"/>
</dbReference>
<dbReference type="CDD" id="cd06852">
    <property type="entry name" value="GT_MraY"/>
    <property type="match status" value="1"/>
</dbReference>
<dbReference type="HAMAP" id="MF_00038">
    <property type="entry name" value="MraY"/>
    <property type="match status" value="1"/>
</dbReference>
<dbReference type="InterPro" id="IPR000715">
    <property type="entry name" value="Glycosyl_transferase_4"/>
</dbReference>
<dbReference type="InterPro" id="IPR003524">
    <property type="entry name" value="PNAcMuramoyl-5peptid_Trfase"/>
</dbReference>
<dbReference type="InterPro" id="IPR018480">
    <property type="entry name" value="PNAcMuramoyl-5peptid_Trfase_CS"/>
</dbReference>
<dbReference type="NCBIfam" id="TIGR00445">
    <property type="entry name" value="mraY"/>
    <property type="match status" value="1"/>
</dbReference>
<dbReference type="PANTHER" id="PTHR22926">
    <property type="entry name" value="PHOSPHO-N-ACETYLMURAMOYL-PENTAPEPTIDE-TRANSFERASE"/>
    <property type="match status" value="1"/>
</dbReference>
<dbReference type="PANTHER" id="PTHR22926:SF5">
    <property type="entry name" value="PHOSPHO-N-ACETYLMURAMOYL-PENTAPEPTIDE-TRANSFERASE HOMOLOG"/>
    <property type="match status" value="1"/>
</dbReference>
<dbReference type="Pfam" id="PF00953">
    <property type="entry name" value="Glycos_transf_4"/>
    <property type="match status" value="1"/>
</dbReference>
<dbReference type="Pfam" id="PF10555">
    <property type="entry name" value="MraY_sig1"/>
    <property type="match status" value="1"/>
</dbReference>
<dbReference type="PROSITE" id="PS01347">
    <property type="entry name" value="MRAY_1"/>
    <property type="match status" value="1"/>
</dbReference>
<dbReference type="PROSITE" id="PS01348">
    <property type="entry name" value="MRAY_2"/>
    <property type="match status" value="1"/>
</dbReference>
<accession>Q7VQJ0</accession>
<name>MRAY_BLOFL</name>